<proteinExistence type="evidence at transcript level"/>
<sequence>MGGDDLSFTRLVITALFGLLMLLQIKETSASTSFVSSSVCKSDHLTYTKPYQQGSLFTINGNPVEKLRFCEALRFHKANGCIFEDSFSDDFCTIHSLLGRRFLEEKTVKDSKNSKPKTEYSHVKVSIAGSGFLLLCCALCCPCFHKERKANSHEVLPKESNSVHQVSSFEMSPSSEKIPQSPFRAPPSPSRVPQSPSRYAMSPRPSRLGPLNLTMSQINTATGNFADSHQIGEGGFGVVFKGVLDDGQVVAIKRAKKEHFENLRTEFKSEVDLLSKIGHRNLVKLLGYVDKGDERLIITEYVRNGTLRDHLDGARGTKLNFNQRLEIVIDVCHGLTYLHSYAERQIIHRDIKSSNILLTDSMRAKVADFGFARGGPTDSNQTHILTQVKGTVGYLDPEYMKTYHLTAKSDVYSFGILLVEILTGRRPVEAKRLPDERITVRWAFDKYNEGRVFELVDPNARERVDEKILRKMFSLAFQCAAPTKKERPDMEAVGKQLWAIRSSYLRRSME</sequence>
<protein>
    <recommendedName>
        <fullName>Calmodulin-binding receptor-like cytoplasmic kinase 3</fullName>
        <ecNumber>2.7.11.1</ecNumber>
    </recommendedName>
</protein>
<name>CRCK3_ARATH</name>
<comment type="catalytic activity">
    <reaction>
        <text>L-seryl-[protein] + ATP = O-phospho-L-seryl-[protein] + ADP + H(+)</text>
        <dbReference type="Rhea" id="RHEA:17989"/>
        <dbReference type="Rhea" id="RHEA-COMP:9863"/>
        <dbReference type="Rhea" id="RHEA-COMP:11604"/>
        <dbReference type="ChEBI" id="CHEBI:15378"/>
        <dbReference type="ChEBI" id="CHEBI:29999"/>
        <dbReference type="ChEBI" id="CHEBI:30616"/>
        <dbReference type="ChEBI" id="CHEBI:83421"/>
        <dbReference type="ChEBI" id="CHEBI:456216"/>
        <dbReference type="EC" id="2.7.11.1"/>
    </reaction>
</comment>
<comment type="catalytic activity">
    <reaction>
        <text>L-threonyl-[protein] + ATP = O-phospho-L-threonyl-[protein] + ADP + H(+)</text>
        <dbReference type="Rhea" id="RHEA:46608"/>
        <dbReference type="Rhea" id="RHEA-COMP:11060"/>
        <dbReference type="Rhea" id="RHEA-COMP:11605"/>
        <dbReference type="ChEBI" id="CHEBI:15378"/>
        <dbReference type="ChEBI" id="CHEBI:30013"/>
        <dbReference type="ChEBI" id="CHEBI:30616"/>
        <dbReference type="ChEBI" id="CHEBI:61977"/>
        <dbReference type="ChEBI" id="CHEBI:456216"/>
        <dbReference type="EC" id="2.7.11.1"/>
    </reaction>
</comment>
<comment type="subunit">
    <text evidence="1">Interacts with calmodulin (CaM) in a Ca(2+)-dependent manner.</text>
</comment>
<comment type="subcellular location">
    <subcellularLocation>
        <location evidence="7">Cytoplasm</location>
    </subcellularLocation>
</comment>
<comment type="similarity">
    <text evidence="4">Belongs to the protein kinase superfamily. Ser/Thr protein kinase family.</text>
</comment>
<keyword id="KW-0067">ATP-binding</keyword>
<keyword id="KW-0963">Cytoplasm</keyword>
<keyword id="KW-0418">Kinase</keyword>
<keyword id="KW-0547">Nucleotide-binding</keyword>
<keyword id="KW-0597">Phosphoprotein</keyword>
<keyword id="KW-1185">Reference proteome</keyword>
<keyword id="KW-0723">Serine/threonine-protein kinase</keyword>
<keyword id="KW-0732">Signal</keyword>
<keyword id="KW-0808">Transferase</keyword>
<feature type="signal peptide" evidence="3">
    <location>
        <begin position="1"/>
        <end position="30"/>
    </location>
</feature>
<feature type="chain" id="PRO_0000420413" description="Calmodulin-binding receptor-like cytoplasmic kinase 3">
    <location>
        <begin position="31"/>
        <end position="510"/>
    </location>
</feature>
<feature type="domain" description="Protein kinase" evidence="4">
    <location>
        <begin position="225"/>
        <end position="499"/>
    </location>
</feature>
<feature type="region of interest" description="Disordered" evidence="6">
    <location>
        <begin position="166"/>
        <end position="209"/>
    </location>
</feature>
<feature type="region of interest" description="CaM-binding" evidence="1">
    <location>
        <begin position="240"/>
        <end position="265"/>
    </location>
</feature>
<feature type="compositionally biased region" description="Polar residues" evidence="6">
    <location>
        <begin position="166"/>
        <end position="178"/>
    </location>
</feature>
<feature type="active site" description="Proton acceptor" evidence="4 5">
    <location>
        <position position="350"/>
    </location>
</feature>
<feature type="binding site" evidence="4">
    <location>
        <begin position="231"/>
        <end position="239"/>
    </location>
    <ligand>
        <name>ATP</name>
        <dbReference type="ChEBI" id="CHEBI:30616"/>
    </ligand>
</feature>
<feature type="binding site" evidence="4">
    <location>
        <position position="253"/>
    </location>
    <ligand>
        <name>ATP</name>
        <dbReference type="ChEBI" id="CHEBI:30616"/>
    </ligand>
</feature>
<feature type="modified residue" description="Phosphothreonine" evidence="2">
    <location>
        <position position="214"/>
    </location>
</feature>
<feature type="modified residue" description="Phosphoserine" evidence="2">
    <location>
        <position position="354"/>
    </location>
</feature>
<feature type="modified residue" description="Phosphothreonine" evidence="2">
    <location>
        <position position="386"/>
    </location>
</feature>
<feature type="modified residue" description="Phosphothreonine" evidence="2">
    <location>
        <position position="391"/>
    </location>
</feature>
<feature type="modified residue" description="Phosphotyrosine" evidence="2">
    <location>
        <position position="399"/>
    </location>
</feature>
<organism>
    <name type="scientific">Arabidopsis thaliana</name>
    <name type="common">Mouse-ear cress</name>
    <dbReference type="NCBI Taxonomy" id="3702"/>
    <lineage>
        <taxon>Eukaryota</taxon>
        <taxon>Viridiplantae</taxon>
        <taxon>Streptophyta</taxon>
        <taxon>Embryophyta</taxon>
        <taxon>Tracheophyta</taxon>
        <taxon>Spermatophyta</taxon>
        <taxon>Magnoliopsida</taxon>
        <taxon>eudicotyledons</taxon>
        <taxon>Gunneridae</taxon>
        <taxon>Pentapetalae</taxon>
        <taxon>rosids</taxon>
        <taxon>malvids</taxon>
        <taxon>Brassicales</taxon>
        <taxon>Brassicaceae</taxon>
        <taxon>Camelineae</taxon>
        <taxon>Arabidopsis</taxon>
    </lineage>
</organism>
<reference key="1">
    <citation type="journal article" date="1999" name="Nature">
        <title>Sequence and analysis of chromosome 2 of the plant Arabidopsis thaliana.</title>
        <authorList>
            <person name="Lin X."/>
            <person name="Kaul S."/>
            <person name="Rounsley S.D."/>
            <person name="Shea T.P."/>
            <person name="Benito M.-I."/>
            <person name="Town C.D."/>
            <person name="Fujii C.Y."/>
            <person name="Mason T.M."/>
            <person name="Bowman C.L."/>
            <person name="Barnstead M.E."/>
            <person name="Feldblyum T.V."/>
            <person name="Buell C.R."/>
            <person name="Ketchum K.A."/>
            <person name="Lee J.J."/>
            <person name="Ronning C.M."/>
            <person name="Koo H.L."/>
            <person name="Moffat K.S."/>
            <person name="Cronin L.A."/>
            <person name="Shen M."/>
            <person name="Pai G."/>
            <person name="Van Aken S."/>
            <person name="Umayam L."/>
            <person name="Tallon L.J."/>
            <person name="Gill J.E."/>
            <person name="Adams M.D."/>
            <person name="Carrera A.J."/>
            <person name="Creasy T.H."/>
            <person name="Goodman H.M."/>
            <person name="Somerville C.R."/>
            <person name="Copenhaver G.P."/>
            <person name="Preuss D."/>
            <person name="Nierman W.C."/>
            <person name="White O."/>
            <person name="Eisen J.A."/>
            <person name="Salzberg S.L."/>
            <person name="Fraser C.M."/>
            <person name="Venter J.C."/>
        </authorList>
    </citation>
    <scope>NUCLEOTIDE SEQUENCE [LARGE SCALE GENOMIC DNA]</scope>
    <source>
        <strain>cv. Columbia</strain>
    </source>
</reference>
<reference key="2">
    <citation type="journal article" date="2017" name="Plant J.">
        <title>Araport11: a complete reannotation of the Arabidopsis thaliana reference genome.</title>
        <authorList>
            <person name="Cheng C.Y."/>
            <person name="Krishnakumar V."/>
            <person name="Chan A.P."/>
            <person name="Thibaud-Nissen F."/>
            <person name="Schobel S."/>
            <person name="Town C.D."/>
        </authorList>
    </citation>
    <scope>GENOME REANNOTATION</scope>
    <source>
        <strain>cv. Columbia</strain>
    </source>
</reference>
<reference key="3">
    <citation type="journal article" date="2003" name="Science">
        <title>Empirical analysis of transcriptional activity in the Arabidopsis genome.</title>
        <authorList>
            <person name="Yamada K."/>
            <person name="Lim J."/>
            <person name="Dale J.M."/>
            <person name="Chen H."/>
            <person name="Shinn P."/>
            <person name="Palm C.J."/>
            <person name="Southwick A.M."/>
            <person name="Wu H.C."/>
            <person name="Kim C.J."/>
            <person name="Nguyen M."/>
            <person name="Pham P.K."/>
            <person name="Cheuk R.F."/>
            <person name="Karlin-Newmann G."/>
            <person name="Liu S.X."/>
            <person name="Lam B."/>
            <person name="Sakano H."/>
            <person name="Wu T."/>
            <person name="Yu G."/>
            <person name="Miranda M."/>
            <person name="Quach H.L."/>
            <person name="Tripp M."/>
            <person name="Chang C.H."/>
            <person name="Lee J.M."/>
            <person name="Toriumi M.J."/>
            <person name="Chan M.M."/>
            <person name="Tang C.C."/>
            <person name="Onodera C.S."/>
            <person name="Deng J.M."/>
            <person name="Akiyama K."/>
            <person name="Ansari Y."/>
            <person name="Arakawa T."/>
            <person name="Banh J."/>
            <person name="Banno F."/>
            <person name="Bowser L."/>
            <person name="Brooks S.Y."/>
            <person name="Carninci P."/>
            <person name="Chao Q."/>
            <person name="Choy N."/>
            <person name="Enju A."/>
            <person name="Goldsmith A.D."/>
            <person name="Gurjal M."/>
            <person name="Hansen N.F."/>
            <person name="Hayashizaki Y."/>
            <person name="Johnson-Hopson C."/>
            <person name="Hsuan V.W."/>
            <person name="Iida K."/>
            <person name="Karnes M."/>
            <person name="Khan S."/>
            <person name="Koesema E."/>
            <person name="Ishida J."/>
            <person name="Jiang P.X."/>
            <person name="Jones T."/>
            <person name="Kawai J."/>
            <person name="Kamiya A."/>
            <person name="Meyers C."/>
            <person name="Nakajima M."/>
            <person name="Narusaka M."/>
            <person name="Seki M."/>
            <person name="Sakurai T."/>
            <person name="Satou M."/>
            <person name="Tamse R."/>
            <person name="Vaysberg M."/>
            <person name="Wallender E.K."/>
            <person name="Wong C."/>
            <person name="Yamamura Y."/>
            <person name="Yuan S."/>
            <person name="Shinozaki K."/>
            <person name="Davis R.W."/>
            <person name="Theologis A."/>
            <person name="Ecker J.R."/>
        </authorList>
    </citation>
    <scope>NUCLEOTIDE SEQUENCE [LARGE SCALE MRNA]</scope>
    <source>
        <strain>cv. Columbia</strain>
    </source>
</reference>
<reference key="4">
    <citation type="journal article" date="2003" name="Plant Physiol.">
        <title>Expansion of the receptor-like kinase/Pelle gene family and receptor-like proteins in Arabidopsis.</title>
        <authorList>
            <person name="Shiu S.H."/>
            <person name="Bleecker A.B."/>
        </authorList>
    </citation>
    <scope>GENE FAMILY</scope>
</reference>
<accession>Q9ASQ5</accession>
<accession>Q9SIG3</accession>
<gene>
    <name type="primary">CRCK3</name>
    <name type="ordered locus">At2g11520</name>
    <name type="ORF">F14P14.15</name>
</gene>
<evidence type="ECO:0000250" key="1"/>
<evidence type="ECO:0000250" key="2">
    <source>
        <dbReference type="UniProtKB" id="O48814"/>
    </source>
</evidence>
<evidence type="ECO:0000255" key="3"/>
<evidence type="ECO:0000255" key="4">
    <source>
        <dbReference type="PROSITE-ProRule" id="PRU00159"/>
    </source>
</evidence>
<evidence type="ECO:0000255" key="5">
    <source>
        <dbReference type="PROSITE-ProRule" id="PRU10027"/>
    </source>
</evidence>
<evidence type="ECO:0000256" key="6">
    <source>
        <dbReference type="SAM" id="MobiDB-lite"/>
    </source>
</evidence>
<evidence type="ECO:0000305" key="7"/>
<dbReference type="EC" id="2.7.11.1"/>
<dbReference type="EMBL" id="AC007166">
    <property type="protein sequence ID" value="AAD28055.2"/>
    <property type="molecule type" value="Genomic_DNA"/>
</dbReference>
<dbReference type="EMBL" id="CP002685">
    <property type="protein sequence ID" value="AEC06173.1"/>
    <property type="molecule type" value="Genomic_DNA"/>
</dbReference>
<dbReference type="EMBL" id="AF367339">
    <property type="protein sequence ID" value="AAK32926.1"/>
    <property type="molecule type" value="mRNA"/>
</dbReference>
<dbReference type="EMBL" id="AY093990">
    <property type="protein sequence ID" value="AAM16251.1"/>
    <property type="molecule type" value="mRNA"/>
</dbReference>
<dbReference type="PIR" id="A84498">
    <property type="entry name" value="A84498"/>
</dbReference>
<dbReference type="RefSeq" id="NP_565351.1">
    <property type="nucleotide sequence ID" value="NM_126855.4"/>
</dbReference>
<dbReference type="SMR" id="Q9ASQ5"/>
<dbReference type="BioGRID" id="1001">
    <property type="interactions" value="1"/>
</dbReference>
<dbReference type="FunCoup" id="Q9ASQ5">
    <property type="interactions" value="1851"/>
</dbReference>
<dbReference type="STRING" id="3702.Q9ASQ5"/>
<dbReference type="GlyGen" id="Q9ASQ5">
    <property type="glycosylation" value="1 site"/>
</dbReference>
<dbReference type="iPTMnet" id="Q9ASQ5"/>
<dbReference type="PaxDb" id="3702-AT2G11520.1"/>
<dbReference type="ProteomicsDB" id="220442"/>
<dbReference type="EnsemblPlants" id="AT2G11520.1">
    <property type="protein sequence ID" value="AT2G11520.1"/>
    <property type="gene ID" value="AT2G11520"/>
</dbReference>
<dbReference type="GeneID" id="815625"/>
<dbReference type="Gramene" id="AT2G11520.1">
    <property type="protein sequence ID" value="AT2G11520.1"/>
    <property type="gene ID" value="AT2G11520"/>
</dbReference>
<dbReference type="KEGG" id="ath:AT2G11520"/>
<dbReference type="Araport" id="AT2G11520"/>
<dbReference type="TAIR" id="AT2G11520">
    <property type="gene designation" value="CRCK3"/>
</dbReference>
<dbReference type="eggNOG" id="KOG1187">
    <property type="taxonomic scope" value="Eukaryota"/>
</dbReference>
<dbReference type="HOGENOM" id="CLU_000288_21_4_1"/>
<dbReference type="InParanoid" id="Q9ASQ5"/>
<dbReference type="OMA" id="DVLMKMF"/>
<dbReference type="PhylomeDB" id="Q9ASQ5"/>
<dbReference type="PRO" id="PR:Q9ASQ5"/>
<dbReference type="Proteomes" id="UP000006548">
    <property type="component" value="Chromosome 2"/>
</dbReference>
<dbReference type="ExpressionAtlas" id="Q9ASQ5">
    <property type="expression patterns" value="baseline and differential"/>
</dbReference>
<dbReference type="GO" id="GO:0005737">
    <property type="term" value="C:cytoplasm"/>
    <property type="evidence" value="ECO:0007669"/>
    <property type="project" value="UniProtKB-SubCell"/>
</dbReference>
<dbReference type="GO" id="GO:0005524">
    <property type="term" value="F:ATP binding"/>
    <property type="evidence" value="ECO:0007669"/>
    <property type="project" value="UniProtKB-KW"/>
</dbReference>
<dbReference type="GO" id="GO:0106310">
    <property type="term" value="F:protein serine kinase activity"/>
    <property type="evidence" value="ECO:0007669"/>
    <property type="project" value="RHEA"/>
</dbReference>
<dbReference type="GO" id="GO:0004674">
    <property type="term" value="F:protein serine/threonine kinase activity"/>
    <property type="evidence" value="ECO:0007669"/>
    <property type="project" value="UniProtKB-KW"/>
</dbReference>
<dbReference type="CDD" id="cd14066">
    <property type="entry name" value="STKc_IRAK"/>
    <property type="match status" value="1"/>
</dbReference>
<dbReference type="FunFam" id="1.10.510.10:FF:000300">
    <property type="entry name" value="Calmodulin-binding receptor-like cytoplasmic kinase 3"/>
    <property type="match status" value="1"/>
</dbReference>
<dbReference type="Gene3D" id="3.30.200.20">
    <property type="entry name" value="Phosphorylase Kinase, domain 1"/>
    <property type="match status" value="1"/>
</dbReference>
<dbReference type="Gene3D" id="1.10.510.10">
    <property type="entry name" value="Transferase(Phosphotransferase) domain 1"/>
    <property type="match status" value="1"/>
</dbReference>
<dbReference type="InterPro" id="IPR011009">
    <property type="entry name" value="Kinase-like_dom_sf"/>
</dbReference>
<dbReference type="InterPro" id="IPR000719">
    <property type="entry name" value="Prot_kinase_dom"/>
</dbReference>
<dbReference type="InterPro" id="IPR017441">
    <property type="entry name" value="Protein_kinase_ATP_BS"/>
</dbReference>
<dbReference type="InterPro" id="IPR001245">
    <property type="entry name" value="Ser-Thr/Tyr_kinase_cat_dom"/>
</dbReference>
<dbReference type="InterPro" id="IPR008271">
    <property type="entry name" value="Ser/Thr_kinase_AS"/>
</dbReference>
<dbReference type="PANTHER" id="PTHR47989">
    <property type="entry name" value="OS01G0750732 PROTEIN"/>
    <property type="match status" value="1"/>
</dbReference>
<dbReference type="PANTHER" id="PTHR47989:SF71">
    <property type="entry name" value="PROTEIN KINASE DOMAIN-CONTAINING PROTEIN"/>
    <property type="match status" value="1"/>
</dbReference>
<dbReference type="Pfam" id="PF07714">
    <property type="entry name" value="PK_Tyr_Ser-Thr"/>
    <property type="match status" value="1"/>
</dbReference>
<dbReference type="SMART" id="SM00220">
    <property type="entry name" value="S_TKc"/>
    <property type="match status" value="1"/>
</dbReference>
<dbReference type="SUPFAM" id="SSF56112">
    <property type="entry name" value="Protein kinase-like (PK-like)"/>
    <property type="match status" value="1"/>
</dbReference>
<dbReference type="PROSITE" id="PS00107">
    <property type="entry name" value="PROTEIN_KINASE_ATP"/>
    <property type="match status" value="1"/>
</dbReference>
<dbReference type="PROSITE" id="PS50011">
    <property type="entry name" value="PROTEIN_KINASE_DOM"/>
    <property type="match status" value="1"/>
</dbReference>
<dbReference type="PROSITE" id="PS00108">
    <property type="entry name" value="PROTEIN_KINASE_ST"/>
    <property type="match status" value="1"/>
</dbReference>